<feature type="chain" id="PRO_0000245476" description="3-hydroxyanthranilate 3,4-dioxygenase">
    <location>
        <begin position="1"/>
        <end position="189"/>
    </location>
</feature>
<feature type="binding site" evidence="1">
    <location>
        <position position="49"/>
    </location>
    <ligand>
        <name>O2</name>
        <dbReference type="ChEBI" id="CHEBI:15379"/>
    </ligand>
</feature>
<feature type="binding site" evidence="1">
    <location>
        <position position="53"/>
    </location>
    <ligand>
        <name>Fe cation</name>
        <dbReference type="ChEBI" id="CHEBI:24875"/>
        <label>1</label>
        <note>catalytic</note>
    </ligand>
</feature>
<feature type="binding site" evidence="1">
    <location>
        <position position="59"/>
    </location>
    <ligand>
        <name>Fe cation</name>
        <dbReference type="ChEBI" id="CHEBI:24875"/>
        <label>1</label>
        <note>catalytic</note>
    </ligand>
</feature>
<feature type="binding site" evidence="1">
    <location>
        <position position="59"/>
    </location>
    <ligand>
        <name>substrate</name>
    </ligand>
</feature>
<feature type="binding site" evidence="1">
    <location>
        <position position="97"/>
    </location>
    <ligand>
        <name>Fe cation</name>
        <dbReference type="ChEBI" id="CHEBI:24875"/>
        <label>1</label>
        <note>catalytic</note>
    </ligand>
</feature>
<feature type="binding site" evidence="1">
    <location>
        <position position="101"/>
    </location>
    <ligand>
        <name>substrate</name>
    </ligand>
</feature>
<feature type="binding site" evidence="1">
    <location>
        <position position="112"/>
    </location>
    <ligand>
        <name>substrate</name>
    </ligand>
</feature>
<feature type="binding site" evidence="1">
    <location>
        <position position="127"/>
    </location>
    <ligand>
        <name>Fe cation</name>
        <dbReference type="ChEBI" id="CHEBI:24875"/>
        <label>2</label>
    </ligand>
</feature>
<feature type="binding site" evidence="1">
    <location>
        <position position="130"/>
    </location>
    <ligand>
        <name>Fe cation</name>
        <dbReference type="ChEBI" id="CHEBI:24875"/>
        <label>2</label>
    </ligand>
</feature>
<feature type="binding site" evidence="1">
    <location>
        <position position="165"/>
    </location>
    <ligand>
        <name>Fe cation</name>
        <dbReference type="ChEBI" id="CHEBI:24875"/>
        <label>2</label>
    </ligand>
</feature>
<feature type="binding site" evidence="1">
    <location>
        <position position="168"/>
    </location>
    <ligand>
        <name>Fe cation</name>
        <dbReference type="ChEBI" id="CHEBI:24875"/>
        <label>2</label>
    </ligand>
</feature>
<evidence type="ECO:0000255" key="1">
    <source>
        <dbReference type="HAMAP-Rule" id="MF_00825"/>
    </source>
</evidence>
<proteinExistence type="inferred from homology"/>
<name>3HAO_CUPPJ</name>
<keyword id="KW-0223">Dioxygenase</keyword>
<keyword id="KW-0408">Iron</keyword>
<keyword id="KW-0479">Metal-binding</keyword>
<keyword id="KW-0560">Oxidoreductase</keyword>
<keyword id="KW-0662">Pyridine nucleotide biosynthesis</keyword>
<reference key="1">
    <citation type="journal article" date="2010" name="PLoS ONE">
        <title>The complete multipartite genome sequence of Cupriavidus necator JMP134, a versatile pollutant degrader.</title>
        <authorList>
            <person name="Lykidis A."/>
            <person name="Perez-Pantoja D."/>
            <person name="Ledger T."/>
            <person name="Mavromatis K."/>
            <person name="Anderson I.J."/>
            <person name="Ivanova N.N."/>
            <person name="Hooper S.D."/>
            <person name="Lapidus A."/>
            <person name="Lucas S."/>
            <person name="Gonzalez B."/>
            <person name="Kyrpides N.C."/>
        </authorList>
    </citation>
    <scope>NUCLEOTIDE SEQUENCE [LARGE SCALE GENOMIC DNA]</scope>
    <source>
        <strain>JMP134 / LMG 1197</strain>
    </source>
</reference>
<accession>Q46PT7</accession>
<protein>
    <recommendedName>
        <fullName evidence="1">3-hydroxyanthranilate 3,4-dioxygenase</fullName>
        <ecNumber evidence="1">1.13.11.6</ecNumber>
    </recommendedName>
    <alternativeName>
        <fullName evidence="1">3-hydroxyanthranilate oxygenase</fullName>
        <shortName evidence="1">3-HAO</shortName>
    </alternativeName>
    <alternativeName>
        <fullName evidence="1">3-hydroxyanthranilic acid dioxygenase</fullName>
        <shortName evidence="1">HAD</shortName>
    </alternativeName>
</protein>
<gene>
    <name evidence="1" type="primary">nbaC</name>
    <name type="ordered locus">Reut_B5502</name>
</gene>
<comment type="function">
    <text evidence="1">Catalyzes the oxidative ring opening of 3-hydroxyanthranilate to 2-amino-3-carboxymuconate semialdehyde, which spontaneously cyclizes to quinolinate.</text>
</comment>
<comment type="catalytic activity">
    <reaction evidence="1">
        <text>3-hydroxyanthranilate + O2 = (2Z,4Z)-2-amino-3-carboxymuconate 6-semialdehyde</text>
        <dbReference type="Rhea" id="RHEA:17953"/>
        <dbReference type="ChEBI" id="CHEBI:15379"/>
        <dbReference type="ChEBI" id="CHEBI:36559"/>
        <dbReference type="ChEBI" id="CHEBI:77612"/>
        <dbReference type="EC" id="1.13.11.6"/>
    </reaction>
</comment>
<comment type="cofactor">
    <cofactor evidence="1">
        <name>Fe(2+)</name>
        <dbReference type="ChEBI" id="CHEBI:29033"/>
    </cofactor>
    <text evidence="1">Binds 2 Fe(2+) ions per subunit.</text>
</comment>
<comment type="pathway">
    <text evidence="1">Cofactor biosynthesis; NAD(+) biosynthesis; quinolinate from L-kynurenine: step 3/3.</text>
</comment>
<comment type="subunit">
    <text evidence="1">Homodimer.</text>
</comment>
<comment type="similarity">
    <text evidence="1">Belongs to the 3-HAO family.</text>
</comment>
<dbReference type="EC" id="1.13.11.6" evidence="1"/>
<dbReference type="EMBL" id="CP000091">
    <property type="protein sequence ID" value="AAZ64847.1"/>
    <property type="molecule type" value="Genomic_DNA"/>
</dbReference>
<dbReference type="SMR" id="Q46PT7"/>
<dbReference type="STRING" id="264198.Reut_B5502"/>
<dbReference type="KEGG" id="reu:Reut_B5502"/>
<dbReference type="eggNOG" id="COG1917">
    <property type="taxonomic scope" value="Bacteria"/>
</dbReference>
<dbReference type="HOGENOM" id="CLU_095765_0_0_4"/>
<dbReference type="OrthoDB" id="5002379at2"/>
<dbReference type="UniPathway" id="UPA00253">
    <property type="reaction ID" value="UER00330"/>
</dbReference>
<dbReference type="GO" id="GO:0000334">
    <property type="term" value="F:3-hydroxyanthranilate 3,4-dioxygenase activity"/>
    <property type="evidence" value="ECO:0007669"/>
    <property type="project" value="UniProtKB-UniRule"/>
</dbReference>
<dbReference type="GO" id="GO:0008198">
    <property type="term" value="F:ferrous iron binding"/>
    <property type="evidence" value="ECO:0007669"/>
    <property type="project" value="UniProtKB-UniRule"/>
</dbReference>
<dbReference type="GO" id="GO:0043420">
    <property type="term" value="P:anthranilate metabolic process"/>
    <property type="evidence" value="ECO:0007669"/>
    <property type="project" value="UniProtKB-UniRule"/>
</dbReference>
<dbReference type="GO" id="GO:0006569">
    <property type="term" value="P:L-tryptophan catabolic process"/>
    <property type="evidence" value="ECO:0007669"/>
    <property type="project" value="UniProtKB-UniRule"/>
</dbReference>
<dbReference type="GO" id="GO:0009435">
    <property type="term" value="P:NAD biosynthetic process"/>
    <property type="evidence" value="ECO:0007669"/>
    <property type="project" value="UniProtKB-UniPathway"/>
</dbReference>
<dbReference type="GO" id="GO:0019805">
    <property type="term" value="P:quinolinate biosynthetic process"/>
    <property type="evidence" value="ECO:0007669"/>
    <property type="project" value="UniProtKB-UniRule"/>
</dbReference>
<dbReference type="CDD" id="cd06123">
    <property type="entry name" value="cupin_HAO"/>
    <property type="match status" value="1"/>
</dbReference>
<dbReference type="Gene3D" id="2.60.120.10">
    <property type="entry name" value="Jelly Rolls"/>
    <property type="match status" value="1"/>
</dbReference>
<dbReference type="HAMAP" id="MF_00825">
    <property type="entry name" value="3_HAO"/>
    <property type="match status" value="1"/>
</dbReference>
<dbReference type="InterPro" id="IPR010329">
    <property type="entry name" value="3hydroanth_dOase"/>
</dbReference>
<dbReference type="InterPro" id="IPR014710">
    <property type="entry name" value="RmlC-like_jellyroll"/>
</dbReference>
<dbReference type="InterPro" id="IPR011051">
    <property type="entry name" value="RmlC_Cupin_sf"/>
</dbReference>
<dbReference type="NCBIfam" id="TIGR03037">
    <property type="entry name" value="anthran_nbaC"/>
    <property type="match status" value="1"/>
</dbReference>
<dbReference type="NCBIfam" id="NF009763">
    <property type="entry name" value="PRK13264.1"/>
    <property type="match status" value="1"/>
</dbReference>
<dbReference type="PANTHER" id="PTHR15497">
    <property type="entry name" value="3-HYDROXYANTHRANILATE 3,4-DIOXYGENASE"/>
    <property type="match status" value="1"/>
</dbReference>
<dbReference type="PANTHER" id="PTHR15497:SF1">
    <property type="entry name" value="3-HYDROXYANTHRANILATE 3,4-DIOXYGENASE"/>
    <property type="match status" value="1"/>
</dbReference>
<dbReference type="Pfam" id="PF06052">
    <property type="entry name" value="3-HAO"/>
    <property type="match status" value="1"/>
</dbReference>
<dbReference type="SUPFAM" id="SSF51182">
    <property type="entry name" value="RmlC-like cupins"/>
    <property type="match status" value="1"/>
</dbReference>
<organism>
    <name type="scientific">Cupriavidus pinatubonensis (strain JMP 134 / LMG 1197)</name>
    <name type="common">Cupriavidus necator (strain JMP 134)</name>
    <dbReference type="NCBI Taxonomy" id="264198"/>
    <lineage>
        <taxon>Bacteria</taxon>
        <taxon>Pseudomonadati</taxon>
        <taxon>Pseudomonadota</taxon>
        <taxon>Betaproteobacteria</taxon>
        <taxon>Burkholderiales</taxon>
        <taxon>Burkholderiaceae</taxon>
        <taxon>Cupriavidus</taxon>
    </lineage>
</organism>
<sequence length="189" mass="21938">MFDLKYGRPLNFKRWLDDHADKLKPPVGNQQIWQDSDMMVTVVGGPNERSDFHDDPIEELFYQFKGNAYLLLWEDGRYERVDLREGDMLLLPPHTLHSPQRPEADSRCLVVERKRPQGQNDAFQWSCASCGTIVQRHEVTLQSIVADLPPLYEKFYASSEDARRCPGCGEIHPGRDFQAWHRTLARHSS</sequence>